<gene>
    <name type="primary">FH10</name>
    <name type="ordered locus">At3g07540</name>
    <name type="ORF">F21O3.25</name>
</gene>
<feature type="signal peptide" evidence="2">
    <location>
        <begin position="1"/>
        <end position="25"/>
    </location>
</feature>
<feature type="chain" id="PRO_0000308535" description="Formin-like protein 10">
    <location>
        <begin position="26"/>
        <end position="841"/>
    </location>
</feature>
<feature type="transmembrane region" description="Helical" evidence="2">
    <location>
        <begin position="102"/>
        <end position="122"/>
    </location>
</feature>
<feature type="domain" description="FH2" evidence="3">
    <location>
        <begin position="469"/>
        <end position="841"/>
    </location>
</feature>
<feature type="region of interest" description="Disordered" evidence="4">
    <location>
        <begin position="137"/>
        <end position="166"/>
    </location>
</feature>
<feature type="region of interest" description="Disordered" evidence="4">
    <location>
        <begin position="254"/>
        <end position="297"/>
    </location>
</feature>
<feature type="region of interest" description="Disordered" evidence="4">
    <location>
        <begin position="403"/>
        <end position="512"/>
    </location>
</feature>
<feature type="compositionally biased region" description="Polar residues" evidence="4">
    <location>
        <begin position="139"/>
        <end position="152"/>
    </location>
</feature>
<feature type="compositionally biased region" description="Low complexity" evidence="4">
    <location>
        <begin position="254"/>
        <end position="278"/>
    </location>
</feature>
<feature type="compositionally biased region" description="Polar residues" evidence="4">
    <location>
        <begin position="279"/>
        <end position="293"/>
    </location>
</feature>
<feature type="compositionally biased region" description="Pro residues" evidence="4">
    <location>
        <begin position="426"/>
        <end position="444"/>
    </location>
</feature>
<feature type="compositionally biased region" description="Polar residues" evidence="4">
    <location>
        <begin position="502"/>
        <end position="512"/>
    </location>
</feature>
<sequence>MDGLCYVIFIIFSLLSCAFSPLSYASPATFSRRHLLQAPVTDPSTFSPPFFPLYSSTSPPPPPSPPQPLPPPAPTFATFPANISALVLPRSPKPQTPSRTLLIPAISAVLAAATLIALAFFFYGRWRGQTSHFKDESKSLASDISQSQQQTLPCPPPRNNNTQNKLSVAPSTSDVLYLGNVVTSSGSGFVKPESPDISPLPPLPARSFLLQHHSEANLDEEEEDDDFYSPLASIAGQESRDRRINPYSNCSCSISSHSDSPAMSPSAAMSPPMNSTAPHWSTNQNTHSPSSPERTVRNNKRYGGQSLRMFSLWNQNLGFPRISSASTSPERGMIRTPDAYARSSMYSSVSTTPDRFFRKVLDSSPPRWNDFSRNVKSLFLSSTSASPARDFCINISESSRSLKSSWEKPELDTTQQRESAAAAVTLPPPQRPPPAMPEPPPLVPPSQSFMVQKSGKKLSFSELPQSCGEGTTDRPKPKLKPLPWDKVRPSSRRTNTWDRLPYNSSNANSKQRSLSCDLPMLNQESKVLDPRKSQNVAVLLTTLKLTTNDVCQALRDGHYDALGVELLESLARVAPSEEEEKKLISYSDDSVIKLAPSERFLKELLNVPFVFKRVDALLSVASFDSKVKHLKRSFSVIQAACEALRNSRMLLRLVGATLEAGMKSGNAHDFKLEALLGLVDIKSSDGRTSILDSVVQKITESEGIKGLQVVRNLSSVLNDAKKSAELDYGVVRMNVSKLYEEVQKISEVLRLCEETGHSEEHQWWKFRESVTRFLETAAEEIKKIEREEGSTLFAVKKITEYFHVDPAKEEAQLLKVFVIVRDFLKILEGVCKKMEVTSSLA</sequence>
<dbReference type="EMBL" id="AC009853">
    <property type="protein sequence ID" value="AAF02158.1"/>
    <property type="molecule type" value="Genomic_DNA"/>
</dbReference>
<dbReference type="EMBL" id="CP002686">
    <property type="protein sequence ID" value="AEE74558.1"/>
    <property type="molecule type" value="Genomic_DNA"/>
</dbReference>
<dbReference type="EMBL" id="AF446866">
    <property type="protein sequence ID" value="AAL38599.1"/>
    <property type="molecule type" value="mRNA"/>
</dbReference>
<dbReference type="EMBL" id="AY050396">
    <property type="protein sequence ID" value="AAK91412.1"/>
    <property type="molecule type" value="mRNA"/>
</dbReference>
<dbReference type="RefSeq" id="NP_566311.1">
    <property type="nucleotide sequence ID" value="NM_111632.3"/>
</dbReference>
<dbReference type="SMR" id="Q9SRR2"/>
<dbReference type="BioGRID" id="5278">
    <property type="interactions" value="15"/>
</dbReference>
<dbReference type="IntAct" id="Q9SRR2">
    <property type="interactions" value="14"/>
</dbReference>
<dbReference type="STRING" id="3702.Q9SRR2"/>
<dbReference type="iPTMnet" id="Q9SRR2"/>
<dbReference type="PaxDb" id="3702-AT3G07540.1"/>
<dbReference type="ProteomicsDB" id="230091"/>
<dbReference type="EnsemblPlants" id="AT3G07540.1">
    <property type="protein sequence ID" value="AT3G07540.1"/>
    <property type="gene ID" value="AT3G07540"/>
</dbReference>
<dbReference type="GeneID" id="819943"/>
<dbReference type="Gramene" id="AT3G07540.1">
    <property type="protein sequence ID" value="AT3G07540.1"/>
    <property type="gene ID" value="AT3G07540"/>
</dbReference>
<dbReference type="KEGG" id="ath:AT3G07540"/>
<dbReference type="Araport" id="AT3G07540"/>
<dbReference type="TAIR" id="AT3G07540">
    <property type="gene designation" value="FH10"/>
</dbReference>
<dbReference type="eggNOG" id="KOG1922">
    <property type="taxonomic scope" value="Eukaryota"/>
</dbReference>
<dbReference type="HOGENOM" id="CLU_007699_0_0_1"/>
<dbReference type="InParanoid" id="Q9SRR2"/>
<dbReference type="OMA" id="FSLWNQN"/>
<dbReference type="PhylomeDB" id="Q9SRR2"/>
<dbReference type="PRO" id="PR:Q9SRR2"/>
<dbReference type="Proteomes" id="UP000006548">
    <property type="component" value="Chromosome 3"/>
</dbReference>
<dbReference type="ExpressionAtlas" id="Q9SRR2">
    <property type="expression patterns" value="baseline and differential"/>
</dbReference>
<dbReference type="GO" id="GO:0016020">
    <property type="term" value="C:membrane"/>
    <property type="evidence" value="ECO:0007669"/>
    <property type="project" value="UniProtKB-SubCell"/>
</dbReference>
<dbReference type="GO" id="GO:0003779">
    <property type="term" value="F:actin binding"/>
    <property type="evidence" value="ECO:0000250"/>
    <property type="project" value="TAIR"/>
</dbReference>
<dbReference type="GO" id="GO:0051015">
    <property type="term" value="F:actin filament binding"/>
    <property type="evidence" value="ECO:0007669"/>
    <property type="project" value="InterPro"/>
</dbReference>
<dbReference type="GO" id="GO:0045010">
    <property type="term" value="P:actin nucleation"/>
    <property type="evidence" value="ECO:0007669"/>
    <property type="project" value="InterPro"/>
</dbReference>
<dbReference type="FunFam" id="1.20.58.2220:FF:000017">
    <property type="entry name" value="Formin-like protein"/>
    <property type="match status" value="1"/>
</dbReference>
<dbReference type="Gene3D" id="1.20.58.2220">
    <property type="entry name" value="Formin, FH2 domain"/>
    <property type="match status" value="1"/>
</dbReference>
<dbReference type="InterPro" id="IPR015425">
    <property type="entry name" value="FH2_Formin"/>
</dbReference>
<dbReference type="InterPro" id="IPR042201">
    <property type="entry name" value="FH2_Formin_sf"/>
</dbReference>
<dbReference type="InterPro" id="IPR027643">
    <property type="entry name" value="Formin-like_plant"/>
</dbReference>
<dbReference type="PANTHER" id="PTHR23213:SF353">
    <property type="entry name" value="FORMIN-LIKE PROTEIN 10"/>
    <property type="match status" value="1"/>
</dbReference>
<dbReference type="PANTHER" id="PTHR23213">
    <property type="entry name" value="FORMIN-RELATED"/>
    <property type="match status" value="1"/>
</dbReference>
<dbReference type="Pfam" id="PF02181">
    <property type="entry name" value="FH2"/>
    <property type="match status" value="1"/>
</dbReference>
<dbReference type="SMART" id="SM00498">
    <property type="entry name" value="FH2"/>
    <property type="match status" value="1"/>
</dbReference>
<dbReference type="SUPFAM" id="SSF101447">
    <property type="entry name" value="Formin homology 2 domain (FH2 domain)"/>
    <property type="match status" value="1"/>
</dbReference>
<dbReference type="PROSITE" id="PS51444">
    <property type="entry name" value="FH2"/>
    <property type="match status" value="1"/>
</dbReference>
<evidence type="ECO:0000250" key="1"/>
<evidence type="ECO:0000255" key="2"/>
<evidence type="ECO:0000255" key="3">
    <source>
        <dbReference type="PROSITE-ProRule" id="PRU00774"/>
    </source>
</evidence>
<evidence type="ECO:0000256" key="4">
    <source>
        <dbReference type="SAM" id="MobiDB-lite"/>
    </source>
</evidence>
<evidence type="ECO:0000269" key="5">
    <source>
    </source>
</evidence>
<evidence type="ECO:0000305" key="6"/>
<organism>
    <name type="scientific">Arabidopsis thaliana</name>
    <name type="common">Mouse-ear cress</name>
    <dbReference type="NCBI Taxonomy" id="3702"/>
    <lineage>
        <taxon>Eukaryota</taxon>
        <taxon>Viridiplantae</taxon>
        <taxon>Streptophyta</taxon>
        <taxon>Embryophyta</taxon>
        <taxon>Tracheophyta</taxon>
        <taxon>Spermatophyta</taxon>
        <taxon>Magnoliopsida</taxon>
        <taxon>eudicotyledons</taxon>
        <taxon>Gunneridae</taxon>
        <taxon>Pentapetalae</taxon>
        <taxon>rosids</taxon>
        <taxon>malvids</taxon>
        <taxon>Brassicales</taxon>
        <taxon>Brassicaceae</taxon>
        <taxon>Camelineae</taxon>
        <taxon>Arabidopsis</taxon>
    </lineage>
</organism>
<accession>Q9SRR2</accession>
<reference key="1">
    <citation type="journal article" date="2000" name="Nature">
        <title>Sequence and analysis of chromosome 3 of the plant Arabidopsis thaliana.</title>
        <authorList>
            <person name="Salanoubat M."/>
            <person name="Lemcke K."/>
            <person name="Rieger M."/>
            <person name="Ansorge W."/>
            <person name="Unseld M."/>
            <person name="Fartmann B."/>
            <person name="Valle G."/>
            <person name="Bloecker H."/>
            <person name="Perez-Alonso M."/>
            <person name="Obermaier B."/>
            <person name="Delseny M."/>
            <person name="Boutry M."/>
            <person name="Grivell L.A."/>
            <person name="Mache R."/>
            <person name="Puigdomenech P."/>
            <person name="De Simone V."/>
            <person name="Choisne N."/>
            <person name="Artiguenave F."/>
            <person name="Robert C."/>
            <person name="Brottier P."/>
            <person name="Wincker P."/>
            <person name="Cattolico L."/>
            <person name="Weissenbach J."/>
            <person name="Saurin W."/>
            <person name="Quetier F."/>
            <person name="Schaefer M."/>
            <person name="Mueller-Auer S."/>
            <person name="Gabel C."/>
            <person name="Fuchs M."/>
            <person name="Benes V."/>
            <person name="Wurmbach E."/>
            <person name="Drzonek H."/>
            <person name="Erfle H."/>
            <person name="Jordan N."/>
            <person name="Bangert S."/>
            <person name="Wiedelmann R."/>
            <person name="Kranz H."/>
            <person name="Voss H."/>
            <person name="Holland R."/>
            <person name="Brandt P."/>
            <person name="Nyakatura G."/>
            <person name="Vezzi A."/>
            <person name="D'Angelo M."/>
            <person name="Pallavicini A."/>
            <person name="Toppo S."/>
            <person name="Simionati B."/>
            <person name="Conrad A."/>
            <person name="Hornischer K."/>
            <person name="Kauer G."/>
            <person name="Loehnert T.-H."/>
            <person name="Nordsiek G."/>
            <person name="Reichelt J."/>
            <person name="Scharfe M."/>
            <person name="Schoen O."/>
            <person name="Bargues M."/>
            <person name="Terol J."/>
            <person name="Climent J."/>
            <person name="Navarro P."/>
            <person name="Collado C."/>
            <person name="Perez-Perez A."/>
            <person name="Ottenwaelder B."/>
            <person name="Duchemin D."/>
            <person name="Cooke R."/>
            <person name="Laudie M."/>
            <person name="Berger-Llauro C."/>
            <person name="Purnelle B."/>
            <person name="Masuy D."/>
            <person name="de Haan M."/>
            <person name="Maarse A.C."/>
            <person name="Alcaraz J.-P."/>
            <person name="Cottet A."/>
            <person name="Casacuberta E."/>
            <person name="Monfort A."/>
            <person name="Argiriou A."/>
            <person name="Flores M."/>
            <person name="Liguori R."/>
            <person name="Vitale D."/>
            <person name="Mannhaupt G."/>
            <person name="Haase D."/>
            <person name="Schoof H."/>
            <person name="Rudd S."/>
            <person name="Zaccaria P."/>
            <person name="Mewes H.-W."/>
            <person name="Mayer K.F.X."/>
            <person name="Kaul S."/>
            <person name="Town C.D."/>
            <person name="Koo H.L."/>
            <person name="Tallon L.J."/>
            <person name="Jenkins J."/>
            <person name="Rooney T."/>
            <person name="Rizzo M."/>
            <person name="Walts A."/>
            <person name="Utterback T."/>
            <person name="Fujii C.Y."/>
            <person name="Shea T.P."/>
            <person name="Creasy T.H."/>
            <person name="Haas B."/>
            <person name="Maiti R."/>
            <person name="Wu D."/>
            <person name="Peterson J."/>
            <person name="Van Aken S."/>
            <person name="Pai G."/>
            <person name="Militscher J."/>
            <person name="Sellers P."/>
            <person name="Gill J.E."/>
            <person name="Feldblyum T.V."/>
            <person name="Preuss D."/>
            <person name="Lin X."/>
            <person name="Nierman W.C."/>
            <person name="Salzberg S.L."/>
            <person name="White O."/>
            <person name="Venter J.C."/>
            <person name="Fraser C.M."/>
            <person name="Kaneko T."/>
            <person name="Nakamura Y."/>
            <person name="Sato S."/>
            <person name="Kato T."/>
            <person name="Asamizu E."/>
            <person name="Sasamoto S."/>
            <person name="Kimura T."/>
            <person name="Idesawa K."/>
            <person name="Kawashima K."/>
            <person name="Kishida Y."/>
            <person name="Kiyokawa C."/>
            <person name="Kohara M."/>
            <person name="Matsumoto M."/>
            <person name="Matsuno A."/>
            <person name="Muraki A."/>
            <person name="Nakayama S."/>
            <person name="Nakazaki N."/>
            <person name="Shinpo S."/>
            <person name="Takeuchi C."/>
            <person name="Wada T."/>
            <person name="Watanabe A."/>
            <person name="Yamada M."/>
            <person name="Yasuda M."/>
            <person name="Tabata S."/>
        </authorList>
    </citation>
    <scope>NUCLEOTIDE SEQUENCE [LARGE SCALE GENOMIC DNA]</scope>
    <source>
        <strain>cv. Columbia</strain>
    </source>
</reference>
<reference key="2">
    <citation type="journal article" date="2017" name="Plant J.">
        <title>Araport11: a complete reannotation of the Arabidopsis thaliana reference genome.</title>
        <authorList>
            <person name="Cheng C.Y."/>
            <person name="Krishnakumar V."/>
            <person name="Chan A.P."/>
            <person name="Thibaud-Nissen F."/>
            <person name="Schobel S."/>
            <person name="Town C.D."/>
        </authorList>
    </citation>
    <scope>GENOME REANNOTATION</scope>
    <source>
        <strain>cv. Columbia</strain>
    </source>
</reference>
<reference key="3">
    <citation type="journal article" date="2003" name="Science">
        <title>Empirical analysis of transcriptional activity in the Arabidopsis genome.</title>
        <authorList>
            <person name="Yamada K."/>
            <person name="Lim J."/>
            <person name="Dale J.M."/>
            <person name="Chen H."/>
            <person name="Shinn P."/>
            <person name="Palm C.J."/>
            <person name="Southwick A.M."/>
            <person name="Wu H.C."/>
            <person name="Kim C.J."/>
            <person name="Nguyen M."/>
            <person name="Pham P.K."/>
            <person name="Cheuk R.F."/>
            <person name="Karlin-Newmann G."/>
            <person name="Liu S.X."/>
            <person name="Lam B."/>
            <person name="Sakano H."/>
            <person name="Wu T."/>
            <person name="Yu G."/>
            <person name="Miranda M."/>
            <person name="Quach H.L."/>
            <person name="Tripp M."/>
            <person name="Chang C.H."/>
            <person name="Lee J.M."/>
            <person name="Toriumi M.J."/>
            <person name="Chan M.M."/>
            <person name="Tang C.C."/>
            <person name="Onodera C.S."/>
            <person name="Deng J.M."/>
            <person name="Akiyama K."/>
            <person name="Ansari Y."/>
            <person name="Arakawa T."/>
            <person name="Banh J."/>
            <person name="Banno F."/>
            <person name="Bowser L."/>
            <person name="Brooks S.Y."/>
            <person name="Carninci P."/>
            <person name="Chao Q."/>
            <person name="Choy N."/>
            <person name="Enju A."/>
            <person name="Goldsmith A.D."/>
            <person name="Gurjal M."/>
            <person name="Hansen N.F."/>
            <person name="Hayashizaki Y."/>
            <person name="Johnson-Hopson C."/>
            <person name="Hsuan V.W."/>
            <person name="Iida K."/>
            <person name="Karnes M."/>
            <person name="Khan S."/>
            <person name="Koesema E."/>
            <person name="Ishida J."/>
            <person name="Jiang P.X."/>
            <person name="Jones T."/>
            <person name="Kawai J."/>
            <person name="Kamiya A."/>
            <person name="Meyers C."/>
            <person name="Nakajima M."/>
            <person name="Narusaka M."/>
            <person name="Seki M."/>
            <person name="Sakurai T."/>
            <person name="Satou M."/>
            <person name="Tamse R."/>
            <person name="Vaysberg M."/>
            <person name="Wallender E.K."/>
            <person name="Wong C."/>
            <person name="Yamamura Y."/>
            <person name="Yuan S."/>
            <person name="Shinozaki K."/>
            <person name="Davis R.W."/>
            <person name="Theologis A."/>
            <person name="Ecker J.R."/>
        </authorList>
    </citation>
    <scope>NUCLEOTIDE SEQUENCE [LARGE SCALE MRNA]</scope>
    <source>
        <strain>cv. Columbia</strain>
    </source>
</reference>
<reference key="4">
    <citation type="journal article" date="2002" name="Trends Plant Sci.">
        <title>Formins: intermediates in signal-transduction cascades that affect cytoskeletal reorganization.</title>
        <authorList>
            <person name="Deeks M.J."/>
            <person name="Hussey P.J."/>
            <person name="Davies B."/>
        </authorList>
    </citation>
    <scope>GENE FAMILY ORGANIZATION</scope>
    <scope>NOMENCLATURE</scope>
</reference>
<reference key="5">
    <citation type="journal article" date="2004" name="BMC Genomics">
        <title>Formin homology 2 domains occur in multiple contexts in angiosperms.</title>
        <authorList>
            <person name="Cvrckova F."/>
            <person name="Novotny M."/>
            <person name="Pickova D."/>
            <person name="Zarsky V."/>
        </authorList>
    </citation>
    <scope>GENE FAMILY ORGANIZATION</scope>
    <scope>NOMENCLATURE</scope>
</reference>
<reference key="6">
    <citation type="journal article" date="2004" name="Plant Cell">
        <title>Arabidopsis formin AtFH6 is a plasma membrane-associated protein upregulated in giant cells induced by parasitic nematodes.</title>
        <authorList>
            <person name="Favery B."/>
            <person name="Chelysheva L.A."/>
            <person name="Lebris M."/>
            <person name="Jammes F."/>
            <person name="Marmagne A."/>
            <person name="De Almeida-Engler J."/>
            <person name="Lecomte P."/>
            <person name="Vaury C."/>
            <person name="Arkowitz R.A."/>
            <person name="Abad P."/>
        </authorList>
    </citation>
    <scope>INDUCTION</scope>
</reference>
<keyword id="KW-0472">Membrane</keyword>
<keyword id="KW-1185">Reference proteome</keyword>
<keyword id="KW-0732">Signal</keyword>
<keyword id="KW-0812">Transmembrane</keyword>
<keyword id="KW-1133">Transmembrane helix</keyword>
<name>FH10_ARATH</name>
<proteinExistence type="evidence at transcript level"/>
<protein>
    <recommendedName>
        <fullName>Formin-like protein 10</fullName>
        <shortName>AtFH10</shortName>
    </recommendedName>
</protein>
<comment type="function">
    <text evidence="1">Might be involved in the organization and polarity of the actin cytoskeleton.</text>
</comment>
<comment type="subcellular location">
    <subcellularLocation>
        <location evidence="6">Membrane</location>
        <topology evidence="6">Single-pass membrane protein</topology>
    </subcellularLocation>
</comment>
<comment type="induction">
    <text evidence="5">Up-regulated during gall formation induced by root-knot nematodes.</text>
</comment>
<comment type="similarity">
    <text evidence="6">Belongs to the formin-like family. Class-I subfamily.</text>
</comment>